<reference key="1">
    <citation type="journal article" date="1993" name="Yeast">
        <title>DNA sequence analysis of a 17 kb fragment of yeast chromosome XI physically localizes the MRB1 gene and reveals eight new open reading frames, including a homologue of the KIN1/KIN2 and SNF1 protein kinases.</title>
        <authorList>
            <person name="Pallier C."/>
            <person name="Valens M."/>
            <person name="Puzos V."/>
            <person name="Fukuhara H."/>
            <person name="Cheret G."/>
            <person name="Sor F."/>
            <person name="Bolotin-Fukuhara M."/>
        </authorList>
    </citation>
    <scope>NUCLEOTIDE SEQUENCE [GENOMIC DNA]</scope>
    <source>
        <strain>ATCC 204508 / S288c</strain>
    </source>
</reference>
<reference key="2">
    <citation type="journal article" date="1994" name="Nature">
        <title>Complete DNA sequence of yeast chromosome XI.</title>
        <authorList>
            <person name="Dujon B."/>
            <person name="Alexandraki D."/>
            <person name="Andre B."/>
            <person name="Ansorge W."/>
            <person name="Baladron V."/>
            <person name="Ballesta J.P.G."/>
            <person name="Banrevi A."/>
            <person name="Bolle P.-A."/>
            <person name="Bolotin-Fukuhara M."/>
            <person name="Bossier P."/>
            <person name="Bou G."/>
            <person name="Boyer J."/>
            <person name="Buitrago M.J."/>
            <person name="Cheret G."/>
            <person name="Colleaux L."/>
            <person name="Daignan-Fornier B."/>
            <person name="del Rey F."/>
            <person name="Dion C."/>
            <person name="Domdey H."/>
            <person name="Duesterhoeft A."/>
            <person name="Duesterhus S."/>
            <person name="Entian K.-D."/>
            <person name="Erfle H."/>
            <person name="Esteban P.F."/>
            <person name="Feldmann H."/>
            <person name="Fernandes L."/>
            <person name="Fobo G.M."/>
            <person name="Fritz C."/>
            <person name="Fukuhara H."/>
            <person name="Gabel C."/>
            <person name="Gaillon L."/>
            <person name="Garcia-Cantalejo J.M."/>
            <person name="Garcia-Ramirez J.J."/>
            <person name="Gent M.E."/>
            <person name="Ghazvini M."/>
            <person name="Goffeau A."/>
            <person name="Gonzalez A."/>
            <person name="Grothues D."/>
            <person name="Guerreiro P."/>
            <person name="Hegemann J.H."/>
            <person name="Hewitt N."/>
            <person name="Hilger F."/>
            <person name="Hollenberg C.P."/>
            <person name="Horaitis O."/>
            <person name="Indge K.J."/>
            <person name="Jacquier A."/>
            <person name="James C.M."/>
            <person name="Jauniaux J.-C."/>
            <person name="Jimenez A."/>
            <person name="Keuchel H."/>
            <person name="Kirchrath L."/>
            <person name="Kleine K."/>
            <person name="Koetter P."/>
            <person name="Legrain P."/>
            <person name="Liebl S."/>
            <person name="Louis E.J."/>
            <person name="Maia e Silva A."/>
            <person name="Marck C."/>
            <person name="Monnier A.-L."/>
            <person name="Moestl D."/>
            <person name="Mueller S."/>
            <person name="Obermaier B."/>
            <person name="Oliver S.G."/>
            <person name="Pallier C."/>
            <person name="Pascolo S."/>
            <person name="Pfeiffer F."/>
            <person name="Philippsen P."/>
            <person name="Planta R.J."/>
            <person name="Pohl F.M."/>
            <person name="Pohl T.M."/>
            <person name="Poehlmann R."/>
            <person name="Portetelle D."/>
            <person name="Purnelle B."/>
            <person name="Puzos V."/>
            <person name="Ramezani Rad M."/>
            <person name="Rasmussen S.W."/>
            <person name="Remacha M.A."/>
            <person name="Revuelta J.L."/>
            <person name="Richard G.-F."/>
            <person name="Rieger M."/>
            <person name="Rodrigues-Pousada C."/>
            <person name="Rose M."/>
            <person name="Rupp T."/>
            <person name="Santos M.A."/>
            <person name="Schwager C."/>
            <person name="Sensen C."/>
            <person name="Skala J."/>
            <person name="Soares H."/>
            <person name="Sor F."/>
            <person name="Stegemann J."/>
            <person name="Tettelin H."/>
            <person name="Thierry A."/>
            <person name="Tzermia M."/>
            <person name="Urrestarazu L.A."/>
            <person name="van Dyck L."/>
            <person name="van Vliet-Reedijk J.C."/>
            <person name="Valens M."/>
            <person name="Vandenbol M."/>
            <person name="Vilela C."/>
            <person name="Vissers S."/>
            <person name="von Wettstein D."/>
            <person name="Voss H."/>
            <person name="Wiemann S."/>
            <person name="Xu G."/>
            <person name="Zimmermann J."/>
            <person name="Haasemann M."/>
            <person name="Becker I."/>
            <person name="Mewes H.-W."/>
        </authorList>
    </citation>
    <scope>NUCLEOTIDE SEQUENCE [LARGE SCALE GENOMIC DNA]</scope>
    <source>
        <strain>ATCC 204508 / S288c</strain>
    </source>
</reference>
<reference key="3">
    <citation type="journal article" date="2014" name="G3 (Bethesda)">
        <title>The reference genome sequence of Saccharomyces cerevisiae: Then and now.</title>
        <authorList>
            <person name="Engel S.R."/>
            <person name="Dietrich F.S."/>
            <person name="Fisk D.G."/>
            <person name="Binkley G."/>
            <person name="Balakrishnan R."/>
            <person name="Costanzo M.C."/>
            <person name="Dwight S.S."/>
            <person name="Hitz B.C."/>
            <person name="Karra K."/>
            <person name="Nash R.S."/>
            <person name="Weng S."/>
            <person name="Wong E.D."/>
            <person name="Lloyd P."/>
            <person name="Skrzypek M.S."/>
            <person name="Miyasato S.R."/>
            <person name="Simison M."/>
            <person name="Cherry J.M."/>
        </authorList>
    </citation>
    <scope>GENOME REANNOTATION</scope>
    <source>
        <strain>ATCC 204508 / S288c</strain>
    </source>
</reference>
<reference key="4">
    <citation type="journal article" date="2007" name="Cancer Res.">
        <title>Identification of genes required for protection from doxorubicin by a genome-wide screen in Saccharomyces cerevisiae.</title>
        <authorList>
            <person name="Xia L."/>
            <person name="Jaafar L."/>
            <person name="Cashikar A."/>
            <person name="Flores-Rozas H."/>
        </authorList>
    </citation>
    <scope>DISRUPTION PHENOTYPE</scope>
</reference>
<reference key="5">
    <citation type="journal article" date="2008" name="Genetics">
        <title>A genomewide suppressor and enhancer analysis of cdc13-1 reveals varied cellular processes influencing telomere capping in Saccharomyces cerevisiae.</title>
        <authorList>
            <person name="Addinall S.G."/>
            <person name="Downey M."/>
            <person name="Yu M."/>
            <person name="Zubko M.K."/>
            <person name="Dewar J."/>
            <person name="Leake A."/>
            <person name="Hallinan J."/>
            <person name="Shaw O."/>
            <person name="James K."/>
            <person name="Wilkinson D.J."/>
            <person name="Wipat A."/>
            <person name="Durocher D."/>
            <person name="Lydall D."/>
        </authorList>
    </citation>
    <scope>FUNCTION</scope>
</reference>
<proteinExistence type="inferred from homology"/>
<comment type="function">
    <text evidence="2">May be involved in telomere capping.</text>
</comment>
<comment type="disruption phenotype">
    <text evidence="1">Decreases resistance to doxorubicin.</text>
</comment>
<comment type="similarity">
    <text evidence="3">Belongs to the MTC2 family.</text>
</comment>
<keyword id="KW-1185">Reference proteome</keyword>
<name>MTC2_YEAST</name>
<evidence type="ECO:0000269" key="1">
    <source>
    </source>
</evidence>
<evidence type="ECO:0000269" key="2">
    <source>
    </source>
</evidence>
<evidence type="ECO:0000305" key="3"/>
<sequence>MGDHNLPDFQTCLKFSVTAKKSFLCMYRDSVSKEKLASSMPSTCDIQLKRAINDAYPGGGIKVTVLNSTTASLDSLATTHVKEFEIVIIPDINSLLQPDQAKLVKIMRDCTVAIEKAQSTRIFIGVVHWNNPVQPSGAAKDGDEAGKPAPKTRIFLPTSFRMGAWLKHKFWFACAPPYLDFESSTESSINTRANNSIGMAEEEKQEPESKRSIILNEEANLNDVFVGSTVRRYILDIMVHLRTHRLTYNAKAGGVYTNSLDDVVLLSRLIGLHSGKMFVSPSHVKEASRWYFPMHLELVQRSSMDSSLLYGSDPNLVDEMLEKLAKIKCEEVNEFENPLFLESLVVKNVLSKVVPPV</sequence>
<feature type="chain" id="PRO_0000203161" description="Maintenance of telomere capping protein 2">
    <location>
        <begin position="1"/>
        <end position="357"/>
    </location>
</feature>
<accession>P34246</accession>
<accession>D6VXI9</accession>
<gene>
    <name type="primary">MTC2</name>
    <name type="ordered locus">YKL098W</name>
    <name type="ORF">YKL448</name>
</gene>
<organism>
    <name type="scientific">Saccharomyces cerevisiae (strain ATCC 204508 / S288c)</name>
    <name type="common">Baker's yeast</name>
    <dbReference type="NCBI Taxonomy" id="559292"/>
    <lineage>
        <taxon>Eukaryota</taxon>
        <taxon>Fungi</taxon>
        <taxon>Dikarya</taxon>
        <taxon>Ascomycota</taxon>
        <taxon>Saccharomycotina</taxon>
        <taxon>Saccharomycetes</taxon>
        <taxon>Saccharomycetales</taxon>
        <taxon>Saccharomycetaceae</taxon>
        <taxon>Saccharomyces</taxon>
    </lineage>
</organism>
<dbReference type="EMBL" id="X71133">
    <property type="protein sequence ID" value="CAA50459.1"/>
    <property type="molecule type" value="Genomic_DNA"/>
</dbReference>
<dbReference type="EMBL" id="Z28098">
    <property type="protein sequence ID" value="CAA81938.1"/>
    <property type="molecule type" value="Genomic_DNA"/>
</dbReference>
<dbReference type="EMBL" id="BK006944">
    <property type="protein sequence ID" value="DAA09059.1"/>
    <property type="molecule type" value="Genomic_DNA"/>
</dbReference>
<dbReference type="PIR" id="S37925">
    <property type="entry name" value="S37925"/>
</dbReference>
<dbReference type="RefSeq" id="NP_012824.1">
    <property type="nucleotide sequence ID" value="NM_001179664.1"/>
</dbReference>
<dbReference type="BioGRID" id="34035">
    <property type="interactions" value="179"/>
</dbReference>
<dbReference type="DIP" id="DIP-4865N"/>
<dbReference type="FunCoup" id="P34246">
    <property type="interactions" value="138"/>
</dbReference>
<dbReference type="IntAct" id="P34246">
    <property type="interactions" value="2"/>
</dbReference>
<dbReference type="STRING" id="4932.YKL098W"/>
<dbReference type="GlyGen" id="P34246">
    <property type="glycosylation" value="2 sites, 1 O-linked glycan (2 sites)"/>
</dbReference>
<dbReference type="iPTMnet" id="P34246"/>
<dbReference type="PaxDb" id="4932-YKL098W"/>
<dbReference type="PeptideAtlas" id="P34246"/>
<dbReference type="EnsemblFungi" id="YKL098W_mRNA">
    <property type="protein sequence ID" value="YKL098W"/>
    <property type="gene ID" value="YKL098W"/>
</dbReference>
<dbReference type="GeneID" id="853763"/>
<dbReference type="KEGG" id="sce:YKL098W"/>
<dbReference type="AGR" id="SGD:S000001581"/>
<dbReference type="SGD" id="S000001581">
    <property type="gene designation" value="MTC2"/>
</dbReference>
<dbReference type="VEuPathDB" id="FungiDB:YKL098W"/>
<dbReference type="eggNOG" id="ENOG502QQMN">
    <property type="taxonomic scope" value="Eukaryota"/>
</dbReference>
<dbReference type="HOGENOM" id="CLU_060779_1_0_1"/>
<dbReference type="InParanoid" id="P34246"/>
<dbReference type="OMA" id="HKFWFAC"/>
<dbReference type="OrthoDB" id="5582146at2759"/>
<dbReference type="BioCyc" id="YEAST:G3O-31888-MONOMER"/>
<dbReference type="BioGRID-ORCS" id="853763">
    <property type="hits" value="1 hit in 10 CRISPR screens"/>
</dbReference>
<dbReference type="PRO" id="PR:P34246"/>
<dbReference type="Proteomes" id="UP000002311">
    <property type="component" value="Chromosome XI"/>
</dbReference>
<dbReference type="RNAct" id="P34246">
    <property type="molecule type" value="protein"/>
</dbReference>
<protein>
    <recommendedName>
        <fullName>Maintenance of telomere capping protein 2</fullName>
    </recommendedName>
</protein>